<comment type="function">
    <text evidence="1">NDH-1 shuttles electrons from NADH, via FMN and iron-sulfur (Fe-S) centers, to quinones in the respiratory chain. The immediate electron acceptor for the enzyme in this species is believed to be ubiquinone. Couples the redox reaction to proton translocation (for every two electrons transferred, four hydrogen ions are translocated across the cytoplasmic membrane), and thus conserves the redox energy in a proton gradient.</text>
</comment>
<comment type="catalytic activity">
    <reaction evidence="1">
        <text>a quinone + NADH + 5 H(+)(in) = a quinol + NAD(+) + 4 H(+)(out)</text>
        <dbReference type="Rhea" id="RHEA:57888"/>
        <dbReference type="ChEBI" id="CHEBI:15378"/>
        <dbReference type="ChEBI" id="CHEBI:24646"/>
        <dbReference type="ChEBI" id="CHEBI:57540"/>
        <dbReference type="ChEBI" id="CHEBI:57945"/>
        <dbReference type="ChEBI" id="CHEBI:132124"/>
    </reaction>
</comment>
<comment type="subunit">
    <text evidence="1">NDH-1 is composed of 13 different subunits. Subunits NuoB, CD, E, F, and G constitute the peripheral sector of the complex.</text>
</comment>
<comment type="subcellular location">
    <subcellularLocation>
        <location evidence="1">Cell inner membrane</location>
        <topology evidence="1">Peripheral membrane protein</topology>
        <orientation evidence="1">Cytoplasmic side</orientation>
    </subcellularLocation>
</comment>
<comment type="similarity">
    <text evidence="1">In the N-terminal section; belongs to the complex I 30 kDa subunit family.</text>
</comment>
<comment type="similarity">
    <text evidence="1">In the C-terminal section; belongs to the complex I 49 kDa subunit family.</text>
</comment>
<keyword id="KW-0997">Cell inner membrane</keyword>
<keyword id="KW-1003">Cell membrane</keyword>
<keyword id="KW-0472">Membrane</keyword>
<keyword id="KW-0511">Multifunctional enzyme</keyword>
<keyword id="KW-0520">NAD</keyword>
<keyword id="KW-0874">Quinone</keyword>
<keyword id="KW-1278">Translocase</keyword>
<keyword id="KW-0813">Transport</keyword>
<keyword id="KW-0830">Ubiquinone</keyword>
<proteinExistence type="inferred from homology"/>
<feature type="chain" id="PRO_0000358677" description="NADH-quinone oxidoreductase subunit C/D">
    <location>
        <begin position="1"/>
        <end position="581"/>
    </location>
</feature>
<feature type="region of interest" description="NADH dehydrogenase I subunit C" evidence="1">
    <location>
        <begin position="1"/>
        <end position="172"/>
    </location>
</feature>
<feature type="region of interest" description="NADH dehydrogenase I subunit D" evidence="1">
    <location>
        <begin position="196"/>
        <end position="581"/>
    </location>
</feature>
<protein>
    <recommendedName>
        <fullName evidence="1">NADH-quinone oxidoreductase subunit C/D</fullName>
        <ecNumber evidence="1">7.1.1.-</ecNumber>
    </recommendedName>
    <alternativeName>
        <fullName evidence="1">NADH dehydrogenase I subunit C/D</fullName>
    </alternativeName>
    <alternativeName>
        <fullName evidence="1">NDH-1 subunit C/D</fullName>
    </alternativeName>
</protein>
<organism>
    <name type="scientific">Rhodopseudomonas palustris (strain BisB5)</name>
    <dbReference type="NCBI Taxonomy" id="316057"/>
    <lineage>
        <taxon>Bacteria</taxon>
        <taxon>Pseudomonadati</taxon>
        <taxon>Pseudomonadota</taxon>
        <taxon>Alphaproteobacteria</taxon>
        <taxon>Hyphomicrobiales</taxon>
        <taxon>Nitrobacteraceae</taxon>
        <taxon>Rhodopseudomonas</taxon>
    </lineage>
</organism>
<dbReference type="EC" id="7.1.1.-" evidence="1"/>
<dbReference type="EMBL" id="CP000283">
    <property type="protein sequence ID" value="ABE38566.1"/>
    <property type="molecule type" value="Genomic_DNA"/>
</dbReference>
<dbReference type="SMR" id="Q13BH3"/>
<dbReference type="STRING" id="316057.RPD_1328"/>
<dbReference type="KEGG" id="rpd:RPD_1328"/>
<dbReference type="eggNOG" id="COG0649">
    <property type="taxonomic scope" value="Bacteria"/>
</dbReference>
<dbReference type="eggNOG" id="COG0852">
    <property type="taxonomic scope" value="Bacteria"/>
</dbReference>
<dbReference type="HOGENOM" id="CLU_015134_3_2_5"/>
<dbReference type="BioCyc" id="RPAL316057:RPD_RS06725-MONOMER"/>
<dbReference type="Proteomes" id="UP000001818">
    <property type="component" value="Chromosome"/>
</dbReference>
<dbReference type="GO" id="GO:0030964">
    <property type="term" value="C:NADH dehydrogenase complex"/>
    <property type="evidence" value="ECO:0007669"/>
    <property type="project" value="InterPro"/>
</dbReference>
<dbReference type="GO" id="GO:0005886">
    <property type="term" value="C:plasma membrane"/>
    <property type="evidence" value="ECO:0007669"/>
    <property type="project" value="UniProtKB-SubCell"/>
</dbReference>
<dbReference type="GO" id="GO:0051287">
    <property type="term" value="F:NAD binding"/>
    <property type="evidence" value="ECO:0007669"/>
    <property type="project" value="InterPro"/>
</dbReference>
<dbReference type="GO" id="GO:0008137">
    <property type="term" value="F:NADH dehydrogenase (ubiquinone) activity"/>
    <property type="evidence" value="ECO:0007669"/>
    <property type="project" value="InterPro"/>
</dbReference>
<dbReference type="GO" id="GO:0050136">
    <property type="term" value="F:NADH:ubiquinone reductase (non-electrogenic) activity"/>
    <property type="evidence" value="ECO:0007669"/>
    <property type="project" value="UniProtKB-UniRule"/>
</dbReference>
<dbReference type="GO" id="GO:0048038">
    <property type="term" value="F:quinone binding"/>
    <property type="evidence" value="ECO:0007669"/>
    <property type="project" value="UniProtKB-KW"/>
</dbReference>
<dbReference type="Gene3D" id="1.10.645.10">
    <property type="entry name" value="Cytochrome-c3 Hydrogenase, chain B"/>
    <property type="match status" value="1"/>
</dbReference>
<dbReference type="Gene3D" id="3.30.460.80">
    <property type="entry name" value="NADH:ubiquinone oxidoreductase, 30kDa subunit"/>
    <property type="match status" value="1"/>
</dbReference>
<dbReference type="HAMAP" id="MF_01359">
    <property type="entry name" value="NDH1_NuoCD_1"/>
    <property type="match status" value="1"/>
</dbReference>
<dbReference type="HAMAP" id="MF_01358">
    <property type="entry name" value="NDH1_NuoD"/>
    <property type="match status" value="1"/>
</dbReference>
<dbReference type="InterPro" id="IPR023062">
    <property type="entry name" value="NADH_DH_suCD"/>
</dbReference>
<dbReference type="InterPro" id="IPR001135">
    <property type="entry name" value="NADH_Q_OxRdtase_suD"/>
</dbReference>
<dbReference type="InterPro" id="IPR037232">
    <property type="entry name" value="NADH_quin_OxRdtase_su_C/D-like"/>
</dbReference>
<dbReference type="InterPro" id="IPR001268">
    <property type="entry name" value="NADH_UbQ_OxRdtase_30kDa_su"/>
</dbReference>
<dbReference type="InterPro" id="IPR014029">
    <property type="entry name" value="NADH_UbQ_OxRdtase_49kDa_CS"/>
</dbReference>
<dbReference type="InterPro" id="IPR022885">
    <property type="entry name" value="NDH1_su_D/H"/>
</dbReference>
<dbReference type="InterPro" id="IPR029014">
    <property type="entry name" value="NiFe-Hase_large"/>
</dbReference>
<dbReference type="NCBIfam" id="TIGR01962">
    <property type="entry name" value="NuoD"/>
    <property type="match status" value="1"/>
</dbReference>
<dbReference type="NCBIfam" id="NF004739">
    <property type="entry name" value="PRK06075.1"/>
    <property type="match status" value="1"/>
</dbReference>
<dbReference type="NCBIfam" id="NF008728">
    <property type="entry name" value="PRK11742.1"/>
    <property type="match status" value="1"/>
</dbReference>
<dbReference type="PANTHER" id="PTHR11993:SF45">
    <property type="entry name" value="NADH-QUINONE OXIDOREDUCTASE SUBUNIT C_D"/>
    <property type="match status" value="1"/>
</dbReference>
<dbReference type="PANTHER" id="PTHR11993">
    <property type="entry name" value="NADH-UBIQUINONE OXIDOREDUCTASE 49 KDA SUBUNIT"/>
    <property type="match status" value="1"/>
</dbReference>
<dbReference type="Pfam" id="PF00329">
    <property type="entry name" value="Complex1_30kDa"/>
    <property type="match status" value="1"/>
</dbReference>
<dbReference type="Pfam" id="PF00346">
    <property type="entry name" value="Complex1_49kDa"/>
    <property type="match status" value="1"/>
</dbReference>
<dbReference type="SUPFAM" id="SSF56762">
    <property type="entry name" value="HydB/Nqo4-like"/>
    <property type="match status" value="1"/>
</dbReference>
<dbReference type="SUPFAM" id="SSF143243">
    <property type="entry name" value="Nqo5-like"/>
    <property type="match status" value="1"/>
</dbReference>
<dbReference type="PROSITE" id="PS00535">
    <property type="entry name" value="COMPLEX1_49K"/>
    <property type="match status" value="1"/>
</dbReference>
<accession>Q13BH3</accession>
<reference key="1">
    <citation type="submission" date="2006-03" db="EMBL/GenBank/DDBJ databases">
        <title>Complete sequence of Rhodopseudomonas palustris BisB5.</title>
        <authorList>
            <consortium name="US DOE Joint Genome Institute"/>
            <person name="Copeland A."/>
            <person name="Lucas S."/>
            <person name="Lapidus A."/>
            <person name="Barry K."/>
            <person name="Detter J.C."/>
            <person name="Glavina del Rio T."/>
            <person name="Hammon N."/>
            <person name="Israni S."/>
            <person name="Dalin E."/>
            <person name="Tice H."/>
            <person name="Pitluck S."/>
            <person name="Chain P."/>
            <person name="Malfatti S."/>
            <person name="Shin M."/>
            <person name="Vergez L."/>
            <person name="Schmutz J."/>
            <person name="Larimer F."/>
            <person name="Land M."/>
            <person name="Hauser L."/>
            <person name="Pelletier D.A."/>
            <person name="Kyrpides N."/>
            <person name="Lykidis A."/>
            <person name="Oda Y."/>
            <person name="Harwood C.S."/>
            <person name="Richardson P."/>
        </authorList>
    </citation>
    <scope>NUCLEOTIDE SEQUENCE [LARGE SCALE GENOMIC DNA]</scope>
    <source>
        <strain>BisB5</strain>
    </source>
</reference>
<sequence length="581" mass="65411">MSGTDLVSELSARFGDAVLGEQITRERFPTVWIRPEASAAVHRFLKHEVDRPFRMLVDLWAIDETARKHREGQPPSGITIASHLMSHERNADIRLKIALDAEYPSTKSIAGVFPNAAWYEREAYDMFGVEFELQPHSQRILLPPGWEGHPMRKTQPGRATERPLFNMTAALFDAKEHALAADPEKFGLPTHRDGVELMILNYGPHSMATHGVFRIVLALDGEEIVAARPDIGFHHRGAEKMAERQTWHSFLPYTDRVDYLGGVMGEMPYLQAVEKACGITVPDRALMVRVMLSEIFRIMNHLLFYGTMAQDTGAMSPVFYMFVDRERAYRVIESITGARMHPGFFRIGGLSMDLPQGWDGLVREFLDWMPSRLDDYEGMVLRNEIFRARTKGVGAYDTAMALDWGVTGPGLRATGYAWDVRKARPYAGFENFDFEIPVGVNGDCFDRTVVRVEEIRQSLKIIRQCVDNMPSGPIKADHPLTTPPPRERMLHDIETMIHHFVGASWGPVLPAGEYTGQVETVRGLTQFALISDGEPSSYRTRIRTPSFAHLQMISAVAPGMMVADLVAFLGSIDYVMSDVDR</sequence>
<name>NUOCD_RHOPS</name>
<evidence type="ECO:0000255" key="1">
    <source>
        <dbReference type="HAMAP-Rule" id="MF_01359"/>
    </source>
</evidence>
<gene>
    <name evidence="1" type="primary">nuoC</name>
    <name evidence="1" type="synonym">nuoCD</name>
    <name evidence="1" type="synonym">nuoD</name>
    <name type="ordered locus">RPD_1328</name>
</gene>